<keyword id="KW-0997">Cell inner membrane</keyword>
<keyword id="KW-1003">Cell membrane</keyword>
<keyword id="KW-0472">Membrane</keyword>
<keyword id="KW-0520">NAD</keyword>
<keyword id="KW-0874">Quinone</keyword>
<keyword id="KW-1278">Translocase</keyword>
<keyword id="KW-0812">Transmembrane</keyword>
<keyword id="KW-1133">Transmembrane helix</keyword>
<keyword id="KW-0813">Transport</keyword>
<keyword id="KW-0830">Ubiquinone</keyword>
<organism>
    <name type="scientific">Acinetobacter baumannii (strain AB0057)</name>
    <dbReference type="NCBI Taxonomy" id="480119"/>
    <lineage>
        <taxon>Bacteria</taxon>
        <taxon>Pseudomonadati</taxon>
        <taxon>Pseudomonadota</taxon>
        <taxon>Gammaproteobacteria</taxon>
        <taxon>Moraxellales</taxon>
        <taxon>Moraxellaceae</taxon>
        <taxon>Acinetobacter</taxon>
        <taxon>Acinetobacter calcoaceticus/baumannii complex</taxon>
    </lineage>
</organism>
<protein>
    <recommendedName>
        <fullName evidence="1">NADH-quinone oxidoreductase subunit K</fullName>
        <ecNumber evidence="1">7.1.1.-</ecNumber>
    </recommendedName>
    <alternativeName>
        <fullName evidence="1">NADH dehydrogenase I subunit K</fullName>
    </alternativeName>
    <alternativeName>
        <fullName evidence="1">NDH-1 subunit K</fullName>
    </alternativeName>
</protein>
<name>NUOK_ACIB5</name>
<proteinExistence type="inferred from homology"/>
<accession>B7I748</accession>
<gene>
    <name evidence="1" type="primary">nuoK</name>
    <name type="ordered locus">AB57_0809</name>
</gene>
<reference key="1">
    <citation type="journal article" date="2008" name="J. Bacteriol.">
        <title>Comparative genome sequence analysis of multidrug-resistant Acinetobacter baumannii.</title>
        <authorList>
            <person name="Adams M.D."/>
            <person name="Goglin K."/>
            <person name="Molyneaux N."/>
            <person name="Hujer K.M."/>
            <person name="Lavender H."/>
            <person name="Jamison J.J."/>
            <person name="MacDonald I.J."/>
            <person name="Martin K.M."/>
            <person name="Russo T."/>
            <person name="Campagnari A.A."/>
            <person name="Hujer A.M."/>
            <person name="Bonomo R.A."/>
            <person name="Gill S.R."/>
        </authorList>
    </citation>
    <scope>NUCLEOTIDE SEQUENCE [LARGE SCALE GENOMIC DNA]</scope>
    <source>
        <strain>AB0057</strain>
    </source>
</reference>
<dbReference type="EC" id="7.1.1.-" evidence="1"/>
<dbReference type="EMBL" id="CP001182">
    <property type="protein sequence ID" value="ACJ40607.1"/>
    <property type="molecule type" value="Genomic_DNA"/>
</dbReference>
<dbReference type="RefSeq" id="WP_000529822.1">
    <property type="nucleotide sequence ID" value="NC_011586.2"/>
</dbReference>
<dbReference type="SMR" id="B7I748"/>
<dbReference type="GeneID" id="92892691"/>
<dbReference type="KEGG" id="abn:AB57_0809"/>
<dbReference type="HOGENOM" id="CLU_144724_0_1_6"/>
<dbReference type="Proteomes" id="UP000007094">
    <property type="component" value="Chromosome"/>
</dbReference>
<dbReference type="GO" id="GO:0030964">
    <property type="term" value="C:NADH dehydrogenase complex"/>
    <property type="evidence" value="ECO:0007669"/>
    <property type="project" value="TreeGrafter"/>
</dbReference>
<dbReference type="GO" id="GO:0005886">
    <property type="term" value="C:plasma membrane"/>
    <property type="evidence" value="ECO:0007669"/>
    <property type="project" value="UniProtKB-SubCell"/>
</dbReference>
<dbReference type="GO" id="GO:0050136">
    <property type="term" value="F:NADH:ubiquinone reductase (non-electrogenic) activity"/>
    <property type="evidence" value="ECO:0007669"/>
    <property type="project" value="UniProtKB-UniRule"/>
</dbReference>
<dbReference type="GO" id="GO:0048038">
    <property type="term" value="F:quinone binding"/>
    <property type="evidence" value="ECO:0007669"/>
    <property type="project" value="UniProtKB-KW"/>
</dbReference>
<dbReference type="GO" id="GO:0042773">
    <property type="term" value="P:ATP synthesis coupled electron transport"/>
    <property type="evidence" value="ECO:0007669"/>
    <property type="project" value="InterPro"/>
</dbReference>
<dbReference type="FunFam" id="1.10.287.3510:FF:000001">
    <property type="entry name" value="NADH-quinone oxidoreductase subunit K"/>
    <property type="match status" value="1"/>
</dbReference>
<dbReference type="Gene3D" id="1.10.287.3510">
    <property type="match status" value="1"/>
</dbReference>
<dbReference type="HAMAP" id="MF_01456">
    <property type="entry name" value="NDH1_NuoK"/>
    <property type="match status" value="1"/>
</dbReference>
<dbReference type="InterPro" id="IPR001133">
    <property type="entry name" value="NADH_UbQ_OxRdtase_chain4L/K"/>
</dbReference>
<dbReference type="InterPro" id="IPR039428">
    <property type="entry name" value="NUOK/Mnh_C1-like"/>
</dbReference>
<dbReference type="NCBIfam" id="NF004319">
    <property type="entry name" value="PRK05715.1-1"/>
    <property type="match status" value="1"/>
</dbReference>
<dbReference type="NCBIfam" id="NF004320">
    <property type="entry name" value="PRK05715.1-2"/>
    <property type="match status" value="1"/>
</dbReference>
<dbReference type="PANTHER" id="PTHR11434:SF16">
    <property type="entry name" value="NADH-UBIQUINONE OXIDOREDUCTASE CHAIN 4L"/>
    <property type="match status" value="1"/>
</dbReference>
<dbReference type="PANTHER" id="PTHR11434">
    <property type="entry name" value="NADH-UBIQUINONE OXIDOREDUCTASE SUBUNIT ND4L"/>
    <property type="match status" value="1"/>
</dbReference>
<dbReference type="Pfam" id="PF00420">
    <property type="entry name" value="Oxidored_q2"/>
    <property type="match status" value="1"/>
</dbReference>
<feature type="chain" id="PRO_0000389913" description="NADH-quinone oxidoreductase subunit K">
    <location>
        <begin position="1"/>
        <end position="102"/>
    </location>
</feature>
<feature type="transmembrane region" description="Helical" evidence="1">
    <location>
        <begin position="6"/>
        <end position="26"/>
    </location>
</feature>
<feature type="transmembrane region" description="Helical" evidence="1">
    <location>
        <begin position="30"/>
        <end position="50"/>
    </location>
</feature>
<feature type="transmembrane region" description="Helical" evidence="1">
    <location>
        <begin position="62"/>
        <end position="82"/>
    </location>
</feature>
<evidence type="ECO:0000255" key="1">
    <source>
        <dbReference type="HAMAP-Rule" id="MF_01456"/>
    </source>
</evidence>
<comment type="function">
    <text evidence="1">NDH-1 shuttles electrons from NADH, via FMN and iron-sulfur (Fe-S) centers, to quinones in the respiratory chain. The immediate electron acceptor for the enzyme in this species is believed to be ubiquinone. Couples the redox reaction to proton translocation (for every two electrons transferred, four hydrogen ions are translocated across the cytoplasmic membrane), and thus conserves the redox energy in a proton gradient.</text>
</comment>
<comment type="catalytic activity">
    <reaction evidence="1">
        <text>a quinone + NADH + 5 H(+)(in) = a quinol + NAD(+) + 4 H(+)(out)</text>
        <dbReference type="Rhea" id="RHEA:57888"/>
        <dbReference type="ChEBI" id="CHEBI:15378"/>
        <dbReference type="ChEBI" id="CHEBI:24646"/>
        <dbReference type="ChEBI" id="CHEBI:57540"/>
        <dbReference type="ChEBI" id="CHEBI:57945"/>
        <dbReference type="ChEBI" id="CHEBI:132124"/>
    </reaction>
</comment>
<comment type="subunit">
    <text evidence="1">NDH-1 is composed of 14 different subunits. Subunits NuoA, H, J, K, L, M, N constitute the membrane sector of the complex.</text>
</comment>
<comment type="subcellular location">
    <subcellularLocation>
        <location evidence="1">Cell inner membrane</location>
        <topology evidence="1">Multi-pass membrane protein</topology>
    </subcellularLocation>
</comment>
<comment type="similarity">
    <text evidence="1">Belongs to the complex I subunit 4L family.</text>
</comment>
<sequence length="102" mass="11178">MGQIPLEHGLIVATILFALGFYGVMVRRNLLFMLMSLEIMMNAAALAFVLAGSVWAQPDGQVMFILILTLAAAEACIGLAIVLQFYHRFHHLDVDAASEMRG</sequence>